<accession>Q9ES53</accession>
<organism>
    <name type="scientific">Rattus norvegicus</name>
    <name type="common">Rat</name>
    <dbReference type="NCBI Taxonomy" id="10116"/>
    <lineage>
        <taxon>Eukaryota</taxon>
        <taxon>Metazoa</taxon>
        <taxon>Chordata</taxon>
        <taxon>Craniata</taxon>
        <taxon>Vertebrata</taxon>
        <taxon>Euteleostomi</taxon>
        <taxon>Mammalia</taxon>
        <taxon>Eutheria</taxon>
        <taxon>Euarchontoglires</taxon>
        <taxon>Glires</taxon>
        <taxon>Rodentia</taxon>
        <taxon>Myomorpha</taxon>
        <taxon>Muroidea</taxon>
        <taxon>Muridae</taxon>
        <taxon>Murinae</taxon>
        <taxon>Rattus</taxon>
    </lineage>
</organism>
<gene>
    <name evidence="7" type="primary">Ufd1</name>
    <name evidence="7" type="synonym">Ufd1l</name>
</gene>
<keyword id="KW-0007">Acetylation</keyword>
<keyword id="KW-0963">Cytoplasm</keyword>
<keyword id="KW-0539">Nucleus</keyword>
<keyword id="KW-0597">Phosphoprotein</keyword>
<keyword id="KW-1185">Reference proteome</keyword>
<keyword id="KW-0833">Ubl conjugation pathway</keyword>
<sequence length="307" mass="34485">MFSFNMFDHPIPRVFQNRFSTQYRCFSVSMLAGPNDRSDVEKGGKIIMPPSALDQLSRLNITYPMLFKLTNKNSDRMTHCGVLEFVADEGICYLPHWMMQNLLLEEGGLVQVESVNLQVATYSKFQPQSPDFLDITNPKAVLENALRNFACLTTGDVIAINYNEKIYELRVMETKPDKAVSIIECDMNVDFDAPLGYKEPERPVQHEESIEGEADHSGYAGEVGFRAFSGSGNRLDGKKKGVEPSPSPIKPGDIKRGIPNYEFKLGKITFIRNSRPMVKKVEEDEAGGRFVAFSGEGQSLRKKGRKP</sequence>
<protein>
    <recommendedName>
        <fullName>Ubiquitin recognition factor in ER-associated degradation protein 1</fullName>
    </recommendedName>
    <alternativeName>
        <fullName>Ubiquitin fusion degradation protein 1 homolog</fullName>
        <shortName>UB fusion protein 1</shortName>
    </alternativeName>
</protein>
<comment type="function">
    <text evidence="1 4">Essential component of the ubiquitin-dependent proteolytic pathway which degrades ubiquitin fusion proteins. The ternary complex containing UFD1, VCP and NPLOC4 binds ubiquitinated proteins and is necessary for the export of misfolded proteins from the ER to the cytoplasm, where they are degraded by the proteasome. The NPLOC4-UFD1-VCP complex regulates spindle disassembly at the end of mitosis and is necessary for the formation of a closed nuclear envelope. It may be involved in the development of some ectoderm-derived structures (PubMed:10811609). Acts as a negative regulator of type I interferon production via the complex formed with VCP and NPLOC4, which binds to RIGI and recruits RNF125 to promote ubiquitination and degradation of RIGI (By similarity).</text>
</comment>
<comment type="pathway">
    <text evidence="4">Protein degradation; proteasomal ubiquitin-dependent pathway.</text>
</comment>
<comment type="subunit">
    <text evidence="1 4">Interacts with USP13 (By similarity). Heterodimer with NPLOC4, this heterodimer binds VCP and inhibits Golgi membrane fusion (PubMed:10811609). Interacts with ZFAND2B; probably through VCP (By similarity).</text>
</comment>
<comment type="interaction">
    <interactant intactId="EBI-399031">
        <id>Q9ES53</id>
    </interactant>
    <interactant intactId="EBI-1993990">
        <id>Q9ES54</id>
        <label>Nploc4</label>
    </interactant>
    <organismsDiffer>false</organismsDiffer>
    <experiments>6</experiments>
</comment>
<comment type="subcellular location">
    <subcellularLocation>
        <location evidence="4">Nucleus</location>
    </subcellularLocation>
    <subcellularLocation>
        <location evidence="4">Cytoplasm</location>
        <location evidence="4">Cytosol</location>
    </subcellularLocation>
</comment>
<comment type="similarity">
    <text evidence="2">Belongs to the UFD1 family.</text>
</comment>
<dbReference type="EMBL" id="AF234601">
    <property type="protein sequence ID" value="AAG27535.1"/>
    <property type="molecule type" value="mRNA"/>
</dbReference>
<dbReference type="EMBL" id="CH473999">
    <property type="protein sequence ID" value="EDL77960.1"/>
    <property type="molecule type" value="Genomic_DNA"/>
</dbReference>
<dbReference type="EMBL" id="BC161818">
    <property type="protein sequence ID" value="AAI61818.1"/>
    <property type="molecule type" value="mRNA"/>
</dbReference>
<dbReference type="RefSeq" id="NP_445870.1">
    <property type="nucleotide sequence ID" value="NM_053418.2"/>
</dbReference>
<dbReference type="SMR" id="Q9ES53"/>
<dbReference type="BioGRID" id="249978">
    <property type="interactions" value="4"/>
</dbReference>
<dbReference type="ComplexPortal" id="CPX-138">
    <property type="entry name" value="Vcp-Npl4-Ufd1 AAA ATPase complex"/>
</dbReference>
<dbReference type="CORUM" id="Q9ES53"/>
<dbReference type="FunCoup" id="Q9ES53">
    <property type="interactions" value="3760"/>
</dbReference>
<dbReference type="IntAct" id="Q9ES53">
    <property type="interactions" value="6"/>
</dbReference>
<dbReference type="MINT" id="Q9ES53"/>
<dbReference type="STRING" id="10116.ENSRNOP00000067081"/>
<dbReference type="iPTMnet" id="Q9ES53"/>
<dbReference type="PhosphoSitePlus" id="Q9ES53"/>
<dbReference type="jPOST" id="Q9ES53"/>
<dbReference type="PaxDb" id="10116-ENSRNOP00000067081"/>
<dbReference type="Ensembl" id="ENSRNOT00000100452.1">
    <property type="protein sequence ID" value="ENSRNOP00000084640.1"/>
    <property type="gene ID" value="ENSRNOG00000047394.3"/>
</dbReference>
<dbReference type="GeneID" id="84478"/>
<dbReference type="KEGG" id="rno:84478"/>
<dbReference type="AGR" id="RGD:619822"/>
<dbReference type="CTD" id="7353"/>
<dbReference type="RGD" id="619822">
    <property type="gene designation" value="Ufd1"/>
</dbReference>
<dbReference type="eggNOG" id="KOG1816">
    <property type="taxonomic scope" value="Eukaryota"/>
</dbReference>
<dbReference type="GeneTree" id="ENSGT00390000002408"/>
<dbReference type="HOGENOM" id="CLU_037790_2_0_1"/>
<dbReference type="InParanoid" id="Q9ES53"/>
<dbReference type="OrthoDB" id="9688at9989"/>
<dbReference type="PhylomeDB" id="Q9ES53"/>
<dbReference type="Reactome" id="R-RNO-110320">
    <property type="pathway name" value="Translesion Synthesis by POLH"/>
</dbReference>
<dbReference type="Reactome" id="R-RNO-5689880">
    <property type="pathway name" value="Ub-specific processing proteases"/>
</dbReference>
<dbReference type="Reactome" id="R-RNO-8951664">
    <property type="pathway name" value="Neddylation"/>
</dbReference>
<dbReference type="Reactome" id="R-RNO-9755511">
    <property type="pathway name" value="KEAP1-NFE2L2 pathway"/>
</dbReference>
<dbReference type="UniPathway" id="UPA00144"/>
<dbReference type="PRO" id="PR:Q9ES53"/>
<dbReference type="Proteomes" id="UP000002494">
    <property type="component" value="Chromosome 11"/>
</dbReference>
<dbReference type="Proteomes" id="UP000234681">
    <property type="component" value="Chromosome 11"/>
</dbReference>
<dbReference type="Bgee" id="ENSRNOG00000047394">
    <property type="expression patterns" value="Expressed in heart and 20 other cell types or tissues"/>
</dbReference>
<dbReference type="GO" id="GO:0005737">
    <property type="term" value="C:cytoplasm"/>
    <property type="evidence" value="ECO:0000266"/>
    <property type="project" value="RGD"/>
</dbReference>
<dbReference type="GO" id="GO:0005829">
    <property type="term" value="C:cytosol"/>
    <property type="evidence" value="ECO:0007669"/>
    <property type="project" value="UniProtKB-SubCell"/>
</dbReference>
<dbReference type="GO" id="GO:0005634">
    <property type="term" value="C:nucleus"/>
    <property type="evidence" value="ECO:0007669"/>
    <property type="project" value="UniProtKB-SubCell"/>
</dbReference>
<dbReference type="GO" id="GO:0036501">
    <property type="term" value="C:UFD1-NPL4 complex"/>
    <property type="evidence" value="ECO:0000314"/>
    <property type="project" value="ParkinsonsUK-UCL"/>
</dbReference>
<dbReference type="GO" id="GO:0034098">
    <property type="term" value="C:VCP-NPL4-UFD1 AAA ATPase complex"/>
    <property type="evidence" value="ECO:0000314"/>
    <property type="project" value="ParkinsonsUK-UCL"/>
</dbReference>
<dbReference type="GO" id="GO:0051117">
    <property type="term" value="F:ATPase binding"/>
    <property type="evidence" value="ECO:0000353"/>
    <property type="project" value="ParkinsonsUK-UCL"/>
</dbReference>
<dbReference type="GO" id="GO:0036435">
    <property type="term" value="F:K48-linked polyubiquitin modification-dependent protein binding"/>
    <property type="evidence" value="ECO:0000266"/>
    <property type="project" value="RGD"/>
</dbReference>
<dbReference type="GO" id="GO:0031593">
    <property type="term" value="F:polyubiquitin modification-dependent protein binding"/>
    <property type="evidence" value="ECO:0000318"/>
    <property type="project" value="GO_Central"/>
</dbReference>
<dbReference type="GO" id="GO:0044877">
    <property type="term" value="F:protein-containing complex binding"/>
    <property type="evidence" value="ECO:0000353"/>
    <property type="project" value="RGD"/>
</dbReference>
<dbReference type="GO" id="GO:0005102">
    <property type="term" value="F:signaling receptor binding"/>
    <property type="evidence" value="ECO:0000353"/>
    <property type="project" value="RGD"/>
</dbReference>
<dbReference type="GO" id="GO:0071218">
    <property type="term" value="P:cellular response to misfolded protein"/>
    <property type="evidence" value="ECO:0000266"/>
    <property type="project" value="RGD"/>
</dbReference>
<dbReference type="GO" id="GO:0036503">
    <property type="term" value="P:ERAD pathway"/>
    <property type="evidence" value="ECO:0000314"/>
    <property type="project" value="ComplexPortal"/>
</dbReference>
<dbReference type="GO" id="GO:0039536">
    <property type="term" value="P:negative regulation of RIG-I signaling pathway"/>
    <property type="evidence" value="ECO:0000250"/>
    <property type="project" value="UniProtKB"/>
</dbReference>
<dbReference type="GO" id="GO:0032480">
    <property type="term" value="P:negative regulation of type I interferon production"/>
    <property type="evidence" value="ECO:0000250"/>
    <property type="project" value="UniProtKB"/>
</dbReference>
<dbReference type="GO" id="GO:0043161">
    <property type="term" value="P:proteasome-mediated ubiquitin-dependent protein catabolic process"/>
    <property type="evidence" value="ECO:0007669"/>
    <property type="project" value="UniProtKB-UniPathway"/>
</dbReference>
<dbReference type="GO" id="GO:0030970">
    <property type="term" value="P:retrograde protein transport, ER to cytosol"/>
    <property type="evidence" value="ECO:0000269"/>
    <property type="project" value="ComplexPortal"/>
</dbReference>
<dbReference type="GO" id="GO:0006511">
    <property type="term" value="P:ubiquitin-dependent protein catabolic process"/>
    <property type="evidence" value="ECO:0000250"/>
    <property type="project" value="UniProtKB"/>
</dbReference>
<dbReference type="FunFam" id="2.40.40.50:FF:000001">
    <property type="entry name" value="Ubiquitin fusion degradation protein 1 homolog"/>
    <property type="match status" value="1"/>
</dbReference>
<dbReference type="FunFam" id="3.10.330.10:FF:000002">
    <property type="entry name" value="ubiquitin fusion degradation protein 1 homolog"/>
    <property type="match status" value="1"/>
</dbReference>
<dbReference type="Gene3D" id="3.10.330.10">
    <property type="match status" value="1"/>
</dbReference>
<dbReference type="Gene3D" id="2.40.40.50">
    <property type="entry name" value="Ubiquitin fusion degradation protein UFD1, N-terminal domain"/>
    <property type="match status" value="1"/>
</dbReference>
<dbReference type="InterPro" id="IPR004854">
    <property type="entry name" value="Ufd1-like"/>
</dbReference>
<dbReference type="InterPro" id="IPR042299">
    <property type="entry name" value="Ufd1-like_Nn"/>
</dbReference>
<dbReference type="InterPro" id="IPR055417">
    <property type="entry name" value="UFD1_N1"/>
</dbReference>
<dbReference type="InterPro" id="IPR055418">
    <property type="entry name" value="UFD1_N2"/>
</dbReference>
<dbReference type="PANTHER" id="PTHR12555">
    <property type="entry name" value="UBIQUITIN FUSION DEGRADATON PROTEIN 1"/>
    <property type="match status" value="1"/>
</dbReference>
<dbReference type="PANTHER" id="PTHR12555:SF13">
    <property type="entry name" value="UBIQUITIN RECOGNITION FACTOR IN ER-ASSOCIATED DEGRADATION PROTEIN 1"/>
    <property type="match status" value="1"/>
</dbReference>
<dbReference type="Pfam" id="PF03152">
    <property type="entry name" value="UFD1_N1"/>
    <property type="match status" value="1"/>
</dbReference>
<dbReference type="Pfam" id="PF24842">
    <property type="entry name" value="UFD1_N2"/>
    <property type="match status" value="1"/>
</dbReference>
<feature type="chain" id="PRO_0000371229" description="Ubiquitin recognition factor in ER-associated degradation protein 1">
    <location>
        <begin position="1"/>
        <end position="307"/>
    </location>
</feature>
<feature type="region of interest" description="Disordered" evidence="3">
    <location>
        <begin position="230"/>
        <end position="255"/>
    </location>
</feature>
<feature type="region of interest" description="Disordered" evidence="3">
    <location>
        <begin position="282"/>
        <end position="307"/>
    </location>
</feature>
<feature type="modified residue" description="N-acetylmethionine" evidence="1">
    <location>
        <position position="1"/>
    </location>
</feature>
<feature type="modified residue" description="Phosphoserine" evidence="1">
    <location>
        <position position="129"/>
    </location>
</feature>
<feature type="modified residue" description="Phosphoserine" evidence="1">
    <location>
        <position position="231"/>
    </location>
</feature>
<feature type="modified residue" description="Phosphoserine" evidence="1">
    <location>
        <position position="245"/>
    </location>
</feature>
<feature type="modified residue" description="Phosphoserine" evidence="1">
    <location>
        <position position="247"/>
    </location>
</feature>
<feature type="modified residue" description="Phosphoserine" evidence="8">
    <location>
        <position position="299"/>
    </location>
</feature>
<reference key="1">
    <citation type="journal article" date="2000" name="EMBO J.">
        <title>A complex of mammalian ufd1 and npl4 links the AAA-ATPase, p97, to ubiquitin and nuclear transport pathways.</title>
        <authorList>
            <person name="Meyer H.H."/>
            <person name="Shorter J.G."/>
            <person name="Seemann J."/>
            <person name="Pappin D."/>
            <person name="Warren G."/>
        </authorList>
    </citation>
    <scope>NUCLEOTIDE SEQUENCE [MRNA]</scope>
    <scope>FUNCTION</scope>
    <scope>INTERACTION WITH NPLOC4 AND VCP</scope>
    <scope>SUBCELLULAR LOCATION</scope>
</reference>
<reference key="2">
    <citation type="submission" date="2005-09" db="EMBL/GenBank/DDBJ databases">
        <authorList>
            <person name="Mural R.J."/>
            <person name="Adams M.D."/>
            <person name="Myers E.W."/>
            <person name="Smith H.O."/>
            <person name="Venter J.C."/>
        </authorList>
    </citation>
    <scope>NUCLEOTIDE SEQUENCE [LARGE SCALE GENOMIC DNA]</scope>
</reference>
<reference key="3">
    <citation type="journal article" date="2004" name="Genome Res.">
        <title>The status, quality, and expansion of the NIH full-length cDNA project: the Mammalian Gene Collection (MGC).</title>
        <authorList>
            <consortium name="The MGC Project Team"/>
        </authorList>
    </citation>
    <scope>NUCLEOTIDE SEQUENCE [LARGE SCALE MRNA]</scope>
    <source>
        <strain evidence="5">Brown Norway/Mcwi</strain>
        <tissue evidence="6">Spleen</tissue>
    </source>
</reference>
<reference key="4">
    <citation type="submission" date="2009-03" db="UniProtKB">
        <authorList>
            <person name="Maurya D.K."/>
            <person name="Bhargava P."/>
        </authorList>
    </citation>
    <scope>IDENTIFICATION BY MASS SPECTROMETRY</scope>
</reference>
<reference key="5">
    <citation type="journal article" date="2012" name="Nat. Commun.">
        <title>Quantitative maps of protein phosphorylation sites across 14 different rat organs and tissues.</title>
        <authorList>
            <person name="Lundby A."/>
            <person name="Secher A."/>
            <person name="Lage K."/>
            <person name="Nordsborg N.B."/>
            <person name="Dmytriyev A."/>
            <person name="Lundby C."/>
            <person name="Olsen J.V."/>
        </authorList>
    </citation>
    <scope>PHOSPHORYLATION [LARGE SCALE ANALYSIS] AT SER-299</scope>
    <scope>IDENTIFICATION BY MASS SPECTROMETRY [LARGE SCALE ANALYSIS]</scope>
</reference>
<evidence type="ECO:0000250" key="1">
    <source>
        <dbReference type="UniProtKB" id="Q92890"/>
    </source>
</evidence>
<evidence type="ECO:0000255" key="2"/>
<evidence type="ECO:0000256" key="3">
    <source>
        <dbReference type="SAM" id="MobiDB-lite"/>
    </source>
</evidence>
<evidence type="ECO:0000269" key="4">
    <source>
    </source>
</evidence>
<evidence type="ECO:0000269" key="5">
    <source>
    </source>
</evidence>
<evidence type="ECO:0000312" key="6">
    <source>
        <dbReference type="EMBL" id="AAI61818.1"/>
    </source>
</evidence>
<evidence type="ECO:0000312" key="7">
    <source>
        <dbReference type="RGD" id="619822"/>
    </source>
</evidence>
<evidence type="ECO:0007744" key="8">
    <source>
    </source>
</evidence>
<proteinExistence type="evidence at protein level"/>
<name>UFD1_RAT</name>